<organism>
    <name type="scientific">Ehrlichia chaffeensis (strain ATCC CRL-10679 / Arkansas)</name>
    <dbReference type="NCBI Taxonomy" id="205920"/>
    <lineage>
        <taxon>Bacteria</taxon>
        <taxon>Pseudomonadati</taxon>
        <taxon>Pseudomonadota</taxon>
        <taxon>Alphaproteobacteria</taxon>
        <taxon>Rickettsiales</taxon>
        <taxon>Anaplasmataceae</taxon>
        <taxon>Ehrlichia</taxon>
    </lineage>
</organism>
<name>RPOZ_EHRCR</name>
<sequence>MARLTVEECMGRTNNKFKLVILASQRAHDLNSGACPVIKYKNGKNTVIALKEIAAKQLDVSSLFNLSVQRCRKYMEKFINSDEPYIAHKPKNNVDIFQASAVAGNSDGLENSSNSRDDNPLGRDNFFSTPENRNNTNS</sequence>
<dbReference type="EC" id="2.7.7.6" evidence="1"/>
<dbReference type="EMBL" id="CP000236">
    <property type="protein sequence ID" value="ABD45328.1"/>
    <property type="molecule type" value="Genomic_DNA"/>
</dbReference>
<dbReference type="RefSeq" id="WP_006011279.1">
    <property type="nucleotide sequence ID" value="NC_007799.1"/>
</dbReference>
<dbReference type="SMR" id="Q2GG39"/>
<dbReference type="STRING" id="205920.ECH_0796"/>
<dbReference type="KEGG" id="ech:ECH_0796"/>
<dbReference type="eggNOG" id="COG1758">
    <property type="taxonomic scope" value="Bacteria"/>
</dbReference>
<dbReference type="HOGENOM" id="CLU_125406_2_1_5"/>
<dbReference type="OrthoDB" id="9796300at2"/>
<dbReference type="Proteomes" id="UP000008320">
    <property type="component" value="Chromosome"/>
</dbReference>
<dbReference type="GO" id="GO:0000428">
    <property type="term" value="C:DNA-directed RNA polymerase complex"/>
    <property type="evidence" value="ECO:0007669"/>
    <property type="project" value="UniProtKB-KW"/>
</dbReference>
<dbReference type="GO" id="GO:0003677">
    <property type="term" value="F:DNA binding"/>
    <property type="evidence" value="ECO:0007669"/>
    <property type="project" value="UniProtKB-UniRule"/>
</dbReference>
<dbReference type="GO" id="GO:0003899">
    <property type="term" value="F:DNA-directed RNA polymerase activity"/>
    <property type="evidence" value="ECO:0007669"/>
    <property type="project" value="UniProtKB-UniRule"/>
</dbReference>
<dbReference type="GO" id="GO:0006351">
    <property type="term" value="P:DNA-templated transcription"/>
    <property type="evidence" value="ECO:0007669"/>
    <property type="project" value="UniProtKB-UniRule"/>
</dbReference>
<dbReference type="Gene3D" id="3.90.940.10">
    <property type="match status" value="1"/>
</dbReference>
<dbReference type="HAMAP" id="MF_00366">
    <property type="entry name" value="RNApol_bact_RpoZ"/>
    <property type="match status" value="1"/>
</dbReference>
<dbReference type="InterPro" id="IPR003716">
    <property type="entry name" value="DNA-dir_RNA_pol_omega"/>
</dbReference>
<dbReference type="InterPro" id="IPR006110">
    <property type="entry name" value="Pol_omega/Rpo6/RPB6"/>
</dbReference>
<dbReference type="InterPro" id="IPR036161">
    <property type="entry name" value="RPB6/omega-like_sf"/>
</dbReference>
<dbReference type="NCBIfam" id="TIGR00690">
    <property type="entry name" value="rpoZ"/>
    <property type="match status" value="1"/>
</dbReference>
<dbReference type="PANTHER" id="PTHR34476">
    <property type="entry name" value="DNA-DIRECTED RNA POLYMERASE SUBUNIT OMEGA"/>
    <property type="match status" value="1"/>
</dbReference>
<dbReference type="PANTHER" id="PTHR34476:SF1">
    <property type="entry name" value="DNA-DIRECTED RNA POLYMERASE SUBUNIT OMEGA"/>
    <property type="match status" value="1"/>
</dbReference>
<dbReference type="Pfam" id="PF01192">
    <property type="entry name" value="RNA_pol_Rpb6"/>
    <property type="match status" value="1"/>
</dbReference>
<dbReference type="SMART" id="SM01409">
    <property type="entry name" value="RNA_pol_Rpb6"/>
    <property type="match status" value="1"/>
</dbReference>
<dbReference type="SUPFAM" id="SSF63562">
    <property type="entry name" value="RPB6/omega subunit-like"/>
    <property type="match status" value="1"/>
</dbReference>
<keyword id="KW-0240">DNA-directed RNA polymerase</keyword>
<keyword id="KW-0548">Nucleotidyltransferase</keyword>
<keyword id="KW-1185">Reference proteome</keyword>
<keyword id="KW-0804">Transcription</keyword>
<keyword id="KW-0808">Transferase</keyword>
<gene>
    <name evidence="1" type="primary">rpoZ</name>
    <name type="ordered locus">ECH_0796</name>
</gene>
<evidence type="ECO:0000255" key="1">
    <source>
        <dbReference type="HAMAP-Rule" id="MF_00366"/>
    </source>
</evidence>
<evidence type="ECO:0000256" key="2">
    <source>
        <dbReference type="SAM" id="MobiDB-lite"/>
    </source>
</evidence>
<accession>Q2GG39</accession>
<proteinExistence type="inferred from homology"/>
<comment type="function">
    <text evidence="1">Promotes RNA polymerase assembly. Latches the N- and C-terminal regions of the beta' subunit thereby facilitating its interaction with the beta and alpha subunits.</text>
</comment>
<comment type="catalytic activity">
    <reaction evidence="1">
        <text>RNA(n) + a ribonucleoside 5'-triphosphate = RNA(n+1) + diphosphate</text>
        <dbReference type="Rhea" id="RHEA:21248"/>
        <dbReference type="Rhea" id="RHEA-COMP:14527"/>
        <dbReference type="Rhea" id="RHEA-COMP:17342"/>
        <dbReference type="ChEBI" id="CHEBI:33019"/>
        <dbReference type="ChEBI" id="CHEBI:61557"/>
        <dbReference type="ChEBI" id="CHEBI:140395"/>
        <dbReference type="EC" id="2.7.7.6"/>
    </reaction>
</comment>
<comment type="subunit">
    <text evidence="1">The RNAP catalytic core consists of 2 alpha, 1 beta, 1 beta' and 1 omega subunit. When a sigma factor is associated with the core the holoenzyme is formed, which can initiate transcription.</text>
</comment>
<comment type="similarity">
    <text evidence="1">Belongs to the RNA polymerase subunit omega family.</text>
</comment>
<reference key="1">
    <citation type="journal article" date="2006" name="PLoS Genet.">
        <title>Comparative genomics of emerging human ehrlichiosis agents.</title>
        <authorList>
            <person name="Dunning Hotopp J.C."/>
            <person name="Lin M."/>
            <person name="Madupu R."/>
            <person name="Crabtree J."/>
            <person name="Angiuoli S.V."/>
            <person name="Eisen J.A."/>
            <person name="Seshadri R."/>
            <person name="Ren Q."/>
            <person name="Wu M."/>
            <person name="Utterback T.R."/>
            <person name="Smith S."/>
            <person name="Lewis M."/>
            <person name="Khouri H."/>
            <person name="Zhang C."/>
            <person name="Niu H."/>
            <person name="Lin Q."/>
            <person name="Ohashi N."/>
            <person name="Zhi N."/>
            <person name="Nelson W.C."/>
            <person name="Brinkac L.M."/>
            <person name="Dodson R.J."/>
            <person name="Rosovitz M.J."/>
            <person name="Sundaram J.P."/>
            <person name="Daugherty S.C."/>
            <person name="Davidsen T."/>
            <person name="Durkin A.S."/>
            <person name="Gwinn M.L."/>
            <person name="Haft D.H."/>
            <person name="Selengut J.D."/>
            <person name="Sullivan S.A."/>
            <person name="Zafar N."/>
            <person name="Zhou L."/>
            <person name="Benahmed F."/>
            <person name="Forberger H."/>
            <person name="Halpin R."/>
            <person name="Mulligan S."/>
            <person name="Robinson J."/>
            <person name="White O."/>
            <person name="Rikihisa Y."/>
            <person name="Tettelin H."/>
        </authorList>
    </citation>
    <scope>NUCLEOTIDE SEQUENCE [LARGE SCALE GENOMIC DNA]</scope>
    <source>
        <strain>ATCC CRL-10679 / Arkansas</strain>
    </source>
</reference>
<feature type="chain" id="PRO_0000237455" description="DNA-directed RNA polymerase subunit omega">
    <location>
        <begin position="1"/>
        <end position="138"/>
    </location>
</feature>
<feature type="region of interest" description="Disordered" evidence="2">
    <location>
        <begin position="104"/>
        <end position="138"/>
    </location>
</feature>
<feature type="compositionally biased region" description="Polar residues" evidence="2">
    <location>
        <begin position="126"/>
        <end position="138"/>
    </location>
</feature>
<protein>
    <recommendedName>
        <fullName evidence="1">DNA-directed RNA polymerase subunit omega</fullName>
        <shortName evidence="1">RNAP omega subunit</shortName>
        <ecNumber evidence="1">2.7.7.6</ecNumber>
    </recommendedName>
    <alternativeName>
        <fullName evidence="1">RNA polymerase omega subunit</fullName>
    </alternativeName>
    <alternativeName>
        <fullName evidence="1">Transcriptase subunit omega</fullName>
    </alternativeName>
</protein>